<organism>
    <name type="scientific">Geobacter sulfurreducens (strain ATCC 51573 / DSM 12127 / PCA)</name>
    <dbReference type="NCBI Taxonomy" id="243231"/>
    <lineage>
        <taxon>Bacteria</taxon>
        <taxon>Pseudomonadati</taxon>
        <taxon>Thermodesulfobacteriota</taxon>
        <taxon>Desulfuromonadia</taxon>
        <taxon>Geobacterales</taxon>
        <taxon>Geobacteraceae</taxon>
        <taxon>Geobacter</taxon>
    </lineage>
</organism>
<gene>
    <name evidence="1" type="primary">apgM</name>
    <name type="ordered locus">GSU1818</name>
</gene>
<evidence type="ECO:0000255" key="1">
    <source>
        <dbReference type="HAMAP-Rule" id="MF_01402"/>
    </source>
</evidence>
<accession>Q74C57</accession>
<dbReference type="EC" id="5.4.2.12" evidence="1"/>
<dbReference type="EMBL" id="AE017180">
    <property type="protein sequence ID" value="AAR35195.1"/>
    <property type="molecule type" value="Genomic_DNA"/>
</dbReference>
<dbReference type="RefSeq" id="NP_952868.1">
    <property type="nucleotide sequence ID" value="NC_002939.5"/>
</dbReference>
<dbReference type="RefSeq" id="WP_010942463.1">
    <property type="nucleotide sequence ID" value="NC_002939.5"/>
</dbReference>
<dbReference type="SMR" id="Q74C57"/>
<dbReference type="STRING" id="243231.GSU1818"/>
<dbReference type="EnsemblBacteria" id="AAR35195">
    <property type="protein sequence ID" value="AAR35195"/>
    <property type="gene ID" value="GSU1818"/>
</dbReference>
<dbReference type="KEGG" id="gsu:GSU1818"/>
<dbReference type="PATRIC" id="fig|243231.5.peg.1855"/>
<dbReference type="eggNOG" id="COG3635">
    <property type="taxonomic scope" value="Bacteria"/>
</dbReference>
<dbReference type="HOGENOM" id="CLU_034906_2_0_7"/>
<dbReference type="InParanoid" id="Q74C57"/>
<dbReference type="OrthoDB" id="9804453at2"/>
<dbReference type="UniPathway" id="UPA00109">
    <property type="reaction ID" value="UER00186"/>
</dbReference>
<dbReference type="Proteomes" id="UP000000577">
    <property type="component" value="Chromosome"/>
</dbReference>
<dbReference type="GO" id="GO:0046872">
    <property type="term" value="F:metal ion binding"/>
    <property type="evidence" value="ECO:0007669"/>
    <property type="project" value="InterPro"/>
</dbReference>
<dbReference type="GO" id="GO:0004619">
    <property type="term" value="F:phosphoglycerate mutase activity"/>
    <property type="evidence" value="ECO:0007669"/>
    <property type="project" value="UniProtKB-EC"/>
</dbReference>
<dbReference type="GO" id="GO:0006096">
    <property type="term" value="P:glycolytic process"/>
    <property type="evidence" value="ECO:0007669"/>
    <property type="project" value="UniProtKB-UniRule"/>
</dbReference>
<dbReference type="CDD" id="cd16011">
    <property type="entry name" value="iPGM_like"/>
    <property type="match status" value="1"/>
</dbReference>
<dbReference type="Gene3D" id="3.40.720.10">
    <property type="entry name" value="Alkaline Phosphatase, subunit A"/>
    <property type="match status" value="2"/>
</dbReference>
<dbReference type="HAMAP" id="MF_01402_B">
    <property type="entry name" value="ApgM_B"/>
    <property type="match status" value="1"/>
</dbReference>
<dbReference type="InterPro" id="IPR017850">
    <property type="entry name" value="Alkaline_phosphatase_core_sf"/>
</dbReference>
<dbReference type="InterPro" id="IPR023665">
    <property type="entry name" value="ApgAM_prokaryotes"/>
</dbReference>
<dbReference type="InterPro" id="IPR006124">
    <property type="entry name" value="Metalloenzyme"/>
</dbReference>
<dbReference type="InterPro" id="IPR004456">
    <property type="entry name" value="Pglycerate_mutase_ApgM"/>
</dbReference>
<dbReference type="NCBIfam" id="TIGR00306">
    <property type="entry name" value="apgM"/>
    <property type="match status" value="1"/>
</dbReference>
<dbReference type="NCBIfam" id="TIGR02535">
    <property type="entry name" value="hyp_Hser_kinase"/>
    <property type="match status" value="1"/>
</dbReference>
<dbReference type="NCBIfam" id="NF003242">
    <property type="entry name" value="PRK04200.1"/>
    <property type="match status" value="1"/>
</dbReference>
<dbReference type="PANTHER" id="PTHR31209:SF4">
    <property type="entry name" value="2,3-BISPHOSPHOGLYCERATE-INDEPENDENT PHOSPHOGLYCERATE MUTASE"/>
    <property type="match status" value="1"/>
</dbReference>
<dbReference type="PANTHER" id="PTHR31209">
    <property type="entry name" value="COFACTOR-INDEPENDENT PHOSPHOGLYCERATE MUTASE"/>
    <property type="match status" value="1"/>
</dbReference>
<dbReference type="Pfam" id="PF01676">
    <property type="entry name" value="Metalloenzyme"/>
    <property type="match status" value="1"/>
</dbReference>
<dbReference type="Pfam" id="PF10143">
    <property type="entry name" value="PhosphMutase"/>
    <property type="match status" value="1"/>
</dbReference>
<dbReference type="PIRSF" id="PIRSF006392">
    <property type="entry name" value="IPGAM_arch"/>
    <property type="match status" value="1"/>
</dbReference>
<dbReference type="SUPFAM" id="SSF53649">
    <property type="entry name" value="Alkaline phosphatase-like"/>
    <property type="match status" value="1"/>
</dbReference>
<reference key="1">
    <citation type="journal article" date="2003" name="Science">
        <title>Genome of Geobacter sulfurreducens: metal reduction in subsurface environments.</title>
        <authorList>
            <person name="Methe B.A."/>
            <person name="Nelson K.E."/>
            <person name="Eisen J.A."/>
            <person name="Paulsen I.T."/>
            <person name="Nelson W.C."/>
            <person name="Heidelberg J.F."/>
            <person name="Wu D."/>
            <person name="Wu M."/>
            <person name="Ward N.L."/>
            <person name="Beanan M.J."/>
            <person name="Dodson R.J."/>
            <person name="Madupu R."/>
            <person name="Brinkac L.M."/>
            <person name="Daugherty S.C."/>
            <person name="DeBoy R.T."/>
            <person name="Durkin A.S."/>
            <person name="Gwinn M.L."/>
            <person name="Kolonay J.F."/>
            <person name="Sullivan S.A."/>
            <person name="Haft D.H."/>
            <person name="Selengut J."/>
            <person name="Davidsen T.M."/>
            <person name="Zafar N."/>
            <person name="White O."/>
            <person name="Tran B."/>
            <person name="Romero C."/>
            <person name="Forberger H.A."/>
            <person name="Weidman J.F."/>
            <person name="Khouri H.M."/>
            <person name="Feldblyum T.V."/>
            <person name="Utterback T.R."/>
            <person name="Van Aken S.E."/>
            <person name="Lovley D.R."/>
            <person name="Fraser C.M."/>
        </authorList>
    </citation>
    <scope>NUCLEOTIDE SEQUENCE [LARGE SCALE GENOMIC DNA]</scope>
    <source>
        <strain>ATCC 51573 / DSM 12127 / PCA</strain>
    </source>
</reference>
<protein>
    <recommendedName>
        <fullName evidence="1">Probable 2,3-bisphosphoglycerate-independent phosphoglycerate mutase</fullName>
        <shortName evidence="1">BPG-independent PGAM</shortName>
        <shortName evidence="1">Phosphoglyceromutase</shortName>
        <shortName evidence="1">aPGAM</shortName>
        <ecNumber evidence="1">5.4.2.12</ecNumber>
    </recommendedName>
</protein>
<name>APGM_GEOSL</name>
<proteinExistence type="inferred from homology"/>
<sequence>MKYIVLLGDGMSDEPMQELGGKTPLQAARTPHMDAMARRGRIGLARTVPEGYPPGSDVANLSVFGYDPRACYTGRSPLEAASMGVELGSADVAFRVNLVNLAPTRGTLVMNDYSAGHISTAEGRELIEAIQGVMGTDEFQFYPGVGYRHLMVWRNGKCGMTVVPPHDISGQSILEHLPKGEGAERLIELMNSSQLVLNNHPQYRRRLEEGKVPANSIWLWGHGKAPRMASFHEKFGLTGAVISAVDLVRGIGVCAGLDVIKVEGATGYIDTNYEGKVTAALEALEAHDYVYLHVEAPDEAGHGGNLEHKLKAIEDFDARVVGPIMAGMEKFGSYRILCTPDHPTPLRLKTHTDAPVPFVLFSGETSENAGVAGYDEESARSAGLVVEDGFRLMEMMLDR</sequence>
<comment type="function">
    <text evidence="1">Catalyzes the interconversion of 2-phosphoglycerate and 3-phosphoglycerate.</text>
</comment>
<comment type="catalytic activity">
    <reaction evidence="1">
        <text>(2R)-2-phosphoglycerate = (2R)-3-phosphoglycerate</text>
        <dbReference type="Rhea" id="RHEA:15901"/>
        <dbReference type="ChEBI" id="CHEBI:58272"/>
        <dbReference type="ChEBI" id="CHEBI:58289"/>
        <dbReference type="EC" id="5.4.2.12"/>
    </reaction>
</comment>
<comment type="pathway">
    <text evidence="1">Carbohydrate degradation; glycolysis; pyruvate from D-glyceraldehyde 3-phosphate: step 3/5.</text>
</comment>
<comment type="similarity">
    <text evidence="1">Belongs to the BPG-independent phosphoglycerate mutase family. A-PGAM subfamily.</text>
</comment>
<keyword id="KW-0324">Glycolysis</keyword>
<keyword id="KW-0413">Isomerase</keyword>
<keyword id="KW-1185">Reference proteome</keyword>
<feature type="chain" id="PRO_0000138154" description="Probable 2,3-bisphosphoglycerate-independent phosphoglycerate mutase">
    <location>
        <begin position="1"/>
        <end position="399"/>
    </location>
</feature>